<organismHost>
    <name type="scientific">Homo sapiens</name>
    <name type="common">Human</name>
    <dbReference type="NCBI Taxonomy" id="9606"/>
</organismHost>
<comment type="function">
    <text evidence="1">Multifunctional enzyme involved in mRNA capping. Catalyzes the formation of the 5' cap structure on the viral plus-strand transcripts. Specifically binds to GTP and displays guanylyltransferase and methyltransferase activities. Has affinity for ssRNA but not for dsRNA. Capping activity is non-specific and caps RNAs that initiate with either a G or an A residue. Together with VP1 polymerase, forms a VP1-VP3 complex positioned near the channels situated at each of the five-fold vertices of the core. Following infection, the outermost layer of the virus is lost, leaving a double-layered particle (DLP) made up of the core and VP6 shell. VP1 then catalyzes the transcription of fully conservative plus-strand genomic RNAs that are capped by VP3 and extruded through the DLP's channels into the cytoplasm where they function as mRNAs for translation of viral proteins. DLPs probably have an RNA triphosphatase activity as well, whereas open cores do not.</text>
</comment>
<comment type="function">
    <text evidence="1">Counteracts the host innate immune response thanks to its phosphodiesterase that degrades the 5'-triphosphorylated, 2'-5' linked adenylate oligomers produced by the host cell IFN-inducible 2',5'-oligoadenylate synthetase (OAS). The host RNaseL is therefore not activated.</text>
</comment>
<comment type="catalytic activity">
    <reaction evidence="1">
        <text>a 5'-end diphospho-ribonucleoside in mRNA + GTP + H(+) = a 5'-end (5'-triphosphoguanosine)-ribonucleoside in mRNA + diphosphate</text>
        <dbReference type="Rhea" id="RHEA:67012"/>
        <dbReference type="Rhea" id="RHEA-COMP:17165"/>
        <dbReference type="Rhea" id="RHEA-COMP:17166"/>
        <dbReference type="ChEBI" id="CHEBI:15378"/>
        <dbReference type="ChEBI" id="CHEBI:33019"/>
        <dbReference type="ChEBI" id="CHEBI:37565"/>
        <dbReference type="ChEBI" id="CHEBI:167616"/>
        <dbReference type="ChEBI" id="CHEBI:167617"/>
        <dbReference type="EC" id="2.7.7.50"/>
    </reaction>
</comment>
<comment type="catalytic activity">
    <reaction evidence="1">
        <text>a 5'-end (5'-triphosphoguanosine)-ribonucleoside in mRNA + S-adenosyl-L-methionine = a 5'-end (N(7)-methyl 5'-triphosphoguanosine)-ribonucleoside in mRNA + S-adenosyl-L-homocysteine</text>
        <dbReference type="Rhea" id="RHEA:67008"/>
        <dbReference type="Rhea" id="RHEA-COMP:17166"/>
        <dbReference type="Rhea" id="RHEA-COMP:17167"/>
        <dbReference type="ChEBI" id="CHEBI:57856"/>
        <dbReference type="ChEBI" id="CHEBI:59789"/>
        <dbReference type="ChEBI" id="CHEBI:156461"/>
        <dbReference type="ChEBI" id="CHEBI:167617"/>
        <dbReference type="EC" id="2.1.1.56"/>
    </reaction>
</comment>
<comment type="catalytic activity">
    <reaction evidence="1">
        <text>5'-triphosphoadenylyl-(2'-&gt;5')-adenylyl-(2'-&gt;5')-adenosine + 2 H2O = 2 AMP + ATP + 2 H(+)</text>
        <dbReference type="Rhea" id="RHEA:45964"/>
        <dbReference type="ChEBI" id="CHEBI:15377"/>
        <dbReference type="ChEBI" id="CHEBI:15378"/>
        <dbReference type="ChEBI" id="CHEBI:30616"/>
        <dbReference type="ChEBI" id="CHEBI:67143"/>
        <dbReference type="ChEBI" id="CHEBI:456215"/>
    </reaction>
</comment>
<comment type="subunit">
    <text evidence="1">Interacts with VP1. Interacts with VP2.</text>
</comment>
<comment type="subcellular location">
    <subcellularLocation>
        <location evidence="1">Virion</location>
    </subcellularLocation>
    <text evidence="1">Attached inside the inner capsid as a minor component. There are about 11 to 12 copies per virion.</text>
</comment>
<comment type="domain">
    <text evidence="1">Contains a bipartite N7-methyltransferase domain, a 2'-O-methyltransferase domain and a GTase/RTPase domain. The C-terminus contains a phosphodiesterase domain that degrades the 5'-triphosphorylated, 2'-5' linked adenylate oligomers produced by the host cell in response to IFN stimulation.</text>
</comment>
<comment type="similarity">
    <text evidence="1">Belongs to the rotavirus VP3 family.</text>
</comment>
<protein>
    <recommendedName>
        <fullName evidence="1">Protein VP3</fullName>
    </recommendedName>
    <domain>
        <recommendedName>
            <fullName evidence="1">2',5'-phosphodiesterase</fullName>
            <ecNumber evidence="1">3.1.4.-</ecNumber>
        </recommendedName>
    </domain>
    <domain>
        <recommendedName>
            <fullName evidence="1">mRNA guanylyltransferase</fullName>
            <ecNumber evidence="1">2.7.7.50</ecNumber>
        </recommendedName>
    </domain>
    <domain>
        <recommendedName>
            <fullName evidence="1">mRNA (guanine-N(7))-methyltransferase</fullName>
            <ecNumber evidence="1">2.1.1.56</ecNumber>
        </recommendedName>
    </domain>
</protein>
<accession>Q6WNW3</accession>
<accession>B1NKQ7</accession>
<sequence length="835" mass="98219">MKVLALRRSVAQVYADTQIYTHDETKDDYENAFLISNLTTHNILYLNYSVKTLQILNKSGIAAVEIQKMDELFTLIRCNFTYDYIEDIVYLHDYSYYTNNEIRTDQHWVTKTNIENYLLPGWKLTYVGYNGNDTRGHYNFSFKCQNAATDDDAIIEYIYSNELDFQNFILKKIKERMTTSLPIARLSNRVFRDKLFKTLVSDYSKVVNVGPRNESMFTFLDHPSIKQFSNGPYLVKDTIKLKQERWLGKRLSQFDIGQYKNMLNVLTTLYQYYDMYHEKPIIYMVGSAPSYWIHDVRQYSNLKFETWDPLDTPYSDLHHKELFYISDVTKLKDNSILYVDIRTDRESIDWKTWRKIVEEQTINNLNIAYRYLSTGKAKVCCVKMTAMDLELPISAKLLHHPTTEIRSEFYLIMDIWDSKNIKRFIPKGVLYSYINNIITENVFIQQPFKLKTLRNEYVVALYALSNDFNNREDVIKLVNNQKNALITVRINNTFKDEPKVGFKDIYDWTFLPTDFETNESIITSYDGCLGMFGLSISLASKPTGNNHLFILSGTNKYFKLDQFANHMSISRRSHQIRFSESATSYSGYIFRDLSNNNFNLIGTNVENSVSGHVYNALIYYRYNYSFDLKRWIYLHSTNKASIEGGRYYEHAPIELIYACRSAREFARLQDDLTVLRYSNEIENYINKVYSITYADDPNYFIGIKFKNIPYEYDVKVPHLTFGVLNISDSMVPDVIAILKKFKSELFRMDITTSYTYMLSDEIYVANVSGVLSTYFKLYNAFYKEQITFGQSRMFIPHITLSFSDKKVVRIDSTRLNIDFIYLRKIKGDTVFDMAE</sequence>
<dbReference type="EC" id="3.1.4.-" evidence="1"/>
<dbReference type="EC" id="2.7.7.50" evidence="1"/>
<dbReference type="EC" id="2.1.1.56" evidence="1"/>
<dbReference type="EMBL" id="AY277916">
    <property type="protein sequence ID" value="AAQ21043.1"/>
    <property type="molecule type" value="Genomic_RNA"/>
</dbReference>
<dbReference type="EMBL" id="EF583015">
    <property type="protein sequence ID" value="ABU87824.1"/>
    <property type="molecule type" value="Genomic_RNA"/>
</dbReference>
<dbReference type="SMR" id="Q6WNW3"/>
<dbReference type="Proteomes" id="UP000001455">
    <property type="component" value="Genome"/>
</dbReference>
<dbReference type="GO" id="GO:0019013">
    <property type="term" value="C:viral nucleocapsid"/>
    <property type="evidence" value="ECO:0007669"/>
    <property type="project" value="UniProtKB-UniRule"/>
</dbReference>
<dbReference type="GO" id="GO:0005525">
    <property type="term" value="F:GTP binding"/>
    <property type="evidence" value="ECO:0007669"/>
    <property type="project" value="UniProtKB-UniRule"/>
</dbReference>
<dbReference type="GO" id="GO:0016787">
    <property type="term" value="F:hydrolase activity"/>
    <property type="evidence" value="ECO:0007669"/>
    <property type="project" value="UniProtKB-KW"/>
</dbReference>
<dbReference type="GO" id="GO:0004482">
    <property type="term" value="F:mRNA 5'-cap (guanine-N7-)-methyltransferase activity"/>
    <property type="evidence" value="ECO:0007669"/>
    <property type="project" value="UniProtKB-UniRule"/>
</dbReference>
<dbReference type="GO" id="GO:0004484">
    <property type="term" value="F:mRNA guanylyltransferase activity"/>
    <property type="evidence" value="ECO:0007669"/>
    <property type="project" value="UniProtKB-UniRule"/>
</dbReference>
<dbReference type="GO" id="GO:0003723">
    <property type="term" value="F:RNA binding"/>
    <property type="evidence" value="ECO:0007669"/>
    <property type="project" value="UniProtKB-UniRule"/>
</dbReference>
<dbReference type="GO" id="GO:0052170">
    <property type="term" value="P:symbiont-mediated suppression of host innate immune response"/>
    <property type="evidence" value="ECO:0007669"/>
    <property type="project" value="UniProtKB-KW"/>
</dbReference>
<dbReference type="GO" id="GO:0016032">
    <property type="term" value="P:viral process"/>
    <property type="evidence" value="ECO:0007669"/>
    <property type="project" value="UniProtKB-UniRule"/>
</dbReference>
<dbReference type="CDD" id="cd20757">
    <property type="entry name" value="capping_2-OMTase_Rotavirus"/>
    <property type="match status" value="1"/>
</dbReference>
<dbReference type="HAMAP" id="MF_04124">
    <property type="entry name" value="Rota_VP3"/>
    <property type="match status" value="1"/>
</dbReference>
<dbReference type="HAMAP" id="MF_04128">
    <property type="entry name" value="Rota_VP3_A"/>
    <property type="match status" value="1"/>
</dbReference>
<dbReference type="InterPro" id="IPR011181">
    <property type="entry name" value="VP3_Rotav"/>
</dbReference>
<dbReference type="Pfam" id="PF06929">
    <property type="entry name" value="Rotavirus_VP3"/>
    <property type="match status" value="1"/>
</dbReference>
<dbReference type="PIRSF" id="PIRSF004015">
    <property type="entry name" value="LigT_rotavirus"/>
    <property type="match status" value="1"/>
</dbReference>
<dbReference type="PROSITE" id="PS51589">
    <property type="entry name" value="SAM_MT56_VP3"/>
    <property type="match status" value="1"/>
</dbReference>
<reference key="1">
    <citation type="journal article" date="2004" name="J. Gen. Virol.">
        <title>Sequence analysis of the guanylyltransferase (VP3) of group A rotaviruses.</title>
        <authorList>
            <person name="Cook J.P."/>
            <person name="McCrae M.A."/>
        </authorList>
    </citation>
    <scope>NUCLEOTIDE SEQUENCE [GENOMIC RNA]</scope>
</reference>
<reference key="2">
    <citation type="journal article" date="2008" name="J. Virol.">
        <title>Full genome-based classification of rotaviruses reveals a common origin between human Wa-Like and porcine rotavirus strains and human DS-1-like and bovine rotavirus strains.</title>
        <authorList>
            <person name="Matthijnssens J."/>
            <person name="Ciarlet M."/>
            <person name="Heiman E.M."/>
            <person name="Arijs I."/>
            <person name="Delbeke T."/>
            <person name="McDonald S.M."/>
            <person name="Palombo E.A."/>
            <person name="Iturriza-Gomara M."/>
            <person name="Maes P."/>
            <person name="Patton J.T."/>
            <person name="Rahman M."/>
            <person name="Van Ranst M."/>
        </authorList>
    </citation>
    <scope>NUCLEOTIDE SEQUENCE [GENOMIC RNA]</scope>
</reference>
<name>VP3_ROTH6</name>
<organism>
    <name type="scientific">Rotavirus A (strain RVA/Human/Indonesia/69M/1980/G8P4[10])</name>
    <name type="common">RV-A</name>
    <dbReference type="NCBI Taxonomy" id="10947"/>
    <lineage>
        <taxon>Viruses</taxon>
        <taxon>Riboviria</taxon>
        <taxon>Orthornavirae</taxon>
        <taxon>Duplornaviricota</taxon>
        <taxon>Resentoviricetes</taxon>
        <taxon>Reovirales</taxon>
        <taxon>Sedoreoviridae</taxon>
        <taxon>Rotavirus</taxon>
        <taxon>Rotavirus A</taxon>
    </lineage>
</organism>
<evidence type="ECO:0000255" key="1">
    <source>
        <dbReference type="HAMAP-Rule" id="MF_04128"/>
    </source>
</evidence>
<evidence type="ECO:0000305" key="2"/>
<proteinExistence type="inferred from homology"/>
<feature type="chain" id="PRO_0000368077" description="Protein VP3">
    <location>
        <begin position="1"/>
        <end position="835"/>
    </location>
</feature>
<feature type="region of interest" description="N7-methyltransferase activity" evidence="1">
    <location>
        <begin position="171"/>
        <end position="245"/>
    </location>
</feature>
<feature type="region of interest" description="2'-O-methyltransferase activity" evidence="1">
    <location>
        <begin position="246"/>
        <end position="428"/>
    </location>
</feature>
<feature type="region of interest" description="N7-methyltransferase activity" evidence="1">
    <location>
        <begin position="429"/>
        <end position="555"/>
    </location>
</feature>
<feature type="region of interest" description="GTase/RTPase activity" evidence="1">
    <location>
        <begin position="556"/>
        <end position="692"/>
    </location>
</feature>
<feature type="region of interest" description="2'-5'-phosphodiesterase activity" evidence="1">
    <location>
        <begin position="693"/>
        <end position="835"/>
    </location>
</feature>
<feature type="active site" description="For 2'-5'-phosphodiesterase activity" evidence="1">
    <location>
        <position position="718"/>
    </location>
</feature>
<feature type="active site" description="For 2'-5'-phosphodiesterase activity" evidence="1">
    <location>
        <position position="720"/>
    </location>
</feature>
<feature type="active site" description="For 2'-5'-phosphodiesterase activity" evidence="1">
    <location>
        <position position="797"/>
    </location>
</feature>
<feature type="active site" description="For 2'-5'-phosphodiesterase activity" evidence="1">
    <location>
        <position position="799"/>
    </location>
</feature>
<feature type="sequence conflict" description="In Ref. 2; ABU87824." evidence="2" ref="2">
    <original>L</original>
    <variation>S</variation>
    <location>
        <position position="317"/>
    </location>
</feature>
<feature type="sequence conflict" description="In Ref. 2; ABU87824." evidence="2" ref="2">
    <original>A</original>
    <variation>V</variation>
    <location>
        <position position="780"/>
    </location>
</feature>
<keyword id="KW-0342">GTP-binding</keyword>
<keyword id="KW-0945">Host-virus interaction</keyword>
<keyword id="KW-0378">Hydrolase</keyword>
<keyword id="KW-1090">Inhibition of host innate immune response by virus</keyword>
<keyword id="KW-0489">Methyltransferase</keyword>
<keyword id="KW-0506">mRNA capping</keyword>
<keyword id="KW-0507">mRNA processing</keyword>
<keyword id="KW-0511">Multifunctional enzyme</keyword>
<keyword id="KW-0547">Nucleotide-binding</keyword>
<keyword id="KW-0548">Nucleotidyltransferase</keyword>
<keyword id="KW-0694">RNA-binding</keyword>
<keyword id="KW-0949">S-adenosyl-L-methionine</keyword>
<keyword id="KW-0808">Transferase</keyword>
<keyword id="KW-0899">Viral immunoevasion</keyword>
<keyword id="KW-0946">Virion</keyword>